<accession>Q8IZQ8</accession>
<accession>Q5UBU5</accession>
<accession>Q8N7Q1</accession>
<keyword id="KW-0010">Activator</keyword>
<keyword id="KW-0025">Alternative splicing</keyword>
<keyword id="KW-0175">Coiled coil</keyword>
<keyword id="KW-0225">Disease variant</keyword>
<keyword id="KW-0539">Nucleus</keyword>
<keyword id="KW-0597">Phosphoprotein</keyword>
<keyword id="KW-1267">Proteomics identification</keyword>
<keyword id="KW-1185">Reference proteome</keyword>
<keyword id="KW-0677">Repeat</keyword>
<keyword id="KW-0804">Transcription</keyword>
<keyword id="KW-0805">Transcription regulation</keyword>
<keyword id="KW-0832">Ubl conjugation</keyword>
<organism>
    <name type="scientific">Homo sapiens</name>
    <name type="common">Human</name>
    <dbReference type="NCBI Taxonomy" id="9606"/>
    <lineage>
        <taxon>Eukaryota</taxon>
        <taxon>Metazoa</taxon>
        <taxon>Chordata</taxon>
        <taxon>Craniata</taxon>
        <taxon>Vertebrata</taxon>
        <taxon>Euteleostomi</taxon>
        <taxon>Mammalia</taxon>
        <taxon>Eutheria</taxon>
        <taxon>Euarchontoglires</taxon>
        <taxon>Primates</taxon>
        <taxon>Haplorrhini</taxon>
        <taxon>Catarrhini</taxon>
        <taxon>Hominidae</taxon>
        <taxon>Homo</taxon>
    </lineage>
</organism>
<proteinExistence type="evidence at protein level"/>
<comment type="function">
    <text evidence="1 2 7 10">Smooth muscle cells (SM) and cardiac muscle cells-specific transcriptional factor which uses the canonical single or multiple CArG boxes DNA sequence. Acts as a cofactor of serum response factor (SRF) with the potential to modulate SRF-target genes. Plays a crucial role in cardiogenesis, urinary bladder development, and differentiation of the smooth muscle cell lineage (myogenesis) (By similarity). Positively regulates the transcription of genes involved in vascular smooth muscle contraction (By similarity).</text>
</comment>
<comment type="subunit">
    <text evidence="2 3">Homodimer. Interacts with SRF, its association does not depend on specific DNA sequences for ternary complex formation (By similarity). Interacts with MLLT7/FOXO4. Interacts (via C-terminal) with EP300 (via the CREB-binding domain). Interacts with HDAC4 and HDAC5 (By similarity). Interacts with MEF2C (By similarity). Interacts (via C-terminus) with STUB1/CHIP (By similarity). Interacts with PURB (By similarity).</text>
</comment>
<comment type="interaction">
    <interactant intactId="EBI-493384">
        <id>Q8IZQ8</id>
    </interactant>
    <interactant intactId="EBI-349832">
        <id>Q9HD26</id>
        <label>GOPC</label>
    </interactant>
    <organismsDiffer>false</organismsDiffer>
    <experiments>4</experiments>
</comment>
<comment type="interaction">
    <interactant intactId="EBI-493384">
        <id>Q8IZQ8</id>
    </interactant>
    <interactant intactId="EBI-493034">
        <id>P11831</id>
        <label>SRF</label>
    </interactant>
    <organismsDiffer>false</organismsDiffer>
    <experiments>2</experiments>
</comment>
<comment type="subcellular location">
    <subcellularLocation>
        <location evidence="1">Nucleus</location>
    </subcellularLocation>
</comment>
<comment type="alternative products">
    <event type="alternative splicing"/>
    <isoform>
        <id>Q8IZQ8-1</id>
        <name>1</name>
        <name>Myocardin-A</name>
        <sequence type="displayed"/>
    </isoform>
    <isoform>
        <id>Q8IZQ8-2</id>
        <name>2</name>
        <name>Myocardin-C</name>
        <sequence type="described" ref="VSP_007658 VSP_007659 VSP_007660 VSP_007661"/>
    </isoform>
    <isoform>
        <id>Q8IZQ8-3</id>
        <name>3</name>
        <name>Myocardin-B</name>
        <sequence type="described" ref="VSP_007659"/>
    </isoform>
</comment>
<comment type="tissue specificity">
    <text evidence="7 9">Expressed in the heart, aorta and bladder (PubMed:12640126, PubMed:20385216). Expressed in smooth muscle cell-containing tissues: stomach, small intestine, colon, lung, placenta and uterus (PubMed:12640126). Very faint expression in prostate and skeletal muscle (PubMed:12640126).</text>
</comment>
<comment type="induction">
    <text evidence="8">Up-regulated during end-stage heart failure caused by dilated cardiomyopathy.</text>
</comment>
<comment type="domain">
    <text evidence="1">The C-terminal region contains a general transcription activation domain. The N-terminal region, comprising a basic and a Gln-rich domain, confers transcriptional potency and specificity by mediating association with the MADS box of SRF. The basic domain may be required for nuclear localization. The SAP domain is important for transactivation and ternary complex formation (By similarity).</text>
</comment>
<comment type="PTM">
    <text evidence="2">Ubiquitinated; by STUB1/CHIP at the C-terminus, leading to its degradation by the proteasome (By similarity). Phosphorylation by GSK3B is required for STUB1/CHIP-mediated ubiquitination (By similarity).</text>
</comment>
<comment type="PTM">
    <text evidence="2 3">Phosphorylation negatively regulates the intrinsic myocardin transcriptional activity (By similarity). Phosphorylated; by GSK3B (By similarity).</text>
</comment>
<comment type="disease" evidence="10">
    <disease id="DI-05721">
        <name>Megabladder, congenital</name>
        <acronym>MGBL</acronym>
        <description>An autosomal dominant congenital anomaly characterized by a massively dilated urinary bladder with disrupted smooth muscle in the bladder wall. MGBL is a sex-limited trait with 95% male predominance, and incomplete penetrance. Affected males frequently die in utero.</description>
        <dbReference type="MIM" id="618719"/>
    </disease>
    <text>The disease may be caused by variants affecting the gene represented in this entry.</text>
</comment>
<name>MYCD_HUMAN</name>
<feature type="chain" id="PRO_0000126631" description="Myocardin">
    <location>
        <begin position="1"/>
        <end position="938"/>
    </location>
</feature>
<feature type="repeat" description="RPEL 1">
    <location>
        <begin position="18"/>
        <end position="43"/>
    </location>
</feature>
<feature type="repeat" description="RPEL 2">
    <location>
        <begin position="62"/>
        <end position="87"/>
    </location>
</feature>
<feature type="repeat" description="RPEL 3">
    <location>
        <begin position="106"/>
        <end position="131"/>
    </location>
</feature>
<feature type="domain" description="SAP" evidence="5">
    <location>
        <begin position="371"/>
        <end position="405"/>
    </location>
</feature>
<feature type="region of interest" description="Disordered" evidence="6">
    <location>
        <begin position="48"/>
        <end position="68"/>
    </location>
</feature>
<feature type="region of interest" description="HDAC5-binding" evidence="1">
    <location>
        <begin position="153"/>
        <end position="205"/>
    </location>
</feature>
<feature type="region of interest" description="Disordered" evidence="6">
    <location>
        <begin position="154"/>
        <end position="281"/>
    </location>
</feature>
<feature type="region of interest" description="Disordered" evidence="6">
    <location>
        <begin position="635"/>
        <end position="678"/>
    </location>
</feature>
<feature type="region of interest" description="Disordered" evidence="6">
    <location>
        <begin position="693"/>
        <end position="734"/>
    </location>
</feature>
<feature type="region of interest" description="Required for interaction with and ubiquitination by STUB1" evidence="3">
    <location>
        <begin position="717"/>
        <end position="938"/>
    </location>
</feature>
<feature type="coiled-coil region" evidence="4">
    <location>
        <begin position="516"/>
        <end position="561"/>
    </location>
</feature>
<feature type="short sequence motif" description="MEF2C-binding" evidence="1">
    <location>
        <begin position="12"/>
        <end position="27"/>
    </location>
</feature>
<feature type="compositionally biased region" description="Basic and acidic residues" evidence="6">
    <location>
        <begin position="48"/>
        <end position="61"/>
    </location>
</feature>
<feature type="compositionally biased region" description="Polar residues" evidence="6">
    <location>
        <begin position="159"/>
        <end position="177"/>
    </location>
</feature>
<feature type="compositionally biased region" description="Polar residues" evidence="6">
    <location>
        <begin position="186"/>
        <end position="203"/>
    </location>
</feature>
<feature type="compositionally biased region" description="Polar residues" evidence="6">
    <location>
        <begin position="210"/>
        <end position="220"/>
    </location>
</feature>
<feature type="compositionally biased region" description="Basic residues" evidence="6">
    <location>
        <begin position="248"/>
        <end position="265"/>
    </location>
</feature>
<feature type="compositionally biased region" description="Low complexity" evidence="6">
    <location>
        <begin position="699"/>
        <end position="715"/>
    </location>
</feature>
<feature type="modified residue" description="Phosphoserine; by GSK3-beta" evidence="3">
    <location>
        <position position="451"/>
    </location>
</feature>
<feature type="modified residue" description="Phosphoserine; by GSK3-beta" evidence="3">
    <location>
        <position position="455"/>
    </location>
</feature>
<feature type="modified residue" description="Phosphoserine; by GSK3-beta" evidence="3">
    <location>
        <position position="459"/>
    </location>
</feature>
<feature type="modified residue" description="Phosphoserine; by GSK3-beta" evidence="3">
    <location>
        <position position="463"/>
    </location>
</feature>
<feature type="modified residue" description="Phosphoserine; by GSK3-beta" evidence="3">
    <location>
        <position position="626"/>
    </location>
</feature>
<feature type="modified residue" description="Phosphoserine; by GSK3-beta" evidence="3">
    <location>
        <position position="630"/>
    </location>
</feature>
<feature type="modified residue" description="Phosphoserine; by GSK3-beta" evidence="3">
    <location>
        <position position="634"/>
    </location>
</feature>
<feature type="modified residue" description="Phosphoserine; by GSK3-beta" evidence="3">
    <location>
        <position position="638"/>
    </location>
</feature>
<feature type="modified residue" description="Phosphoserine; by MAPK1 and MAPK3" evidence="3">
    <location>
        <position position="815"/>
    </location>
</feature>
<feature type="modified residue" description="Phosphoserine; by MAPK1 and MAPK3" evidence="3">
    <location>
        <position position="862"/>
    </location>
</feature>
<feature type="modified residue" description="Phosphoserine; by MAPK1 and MAPK3" evidence="3">
    <location>
        <position position="869"/>
    </location>
</feature>
<feature type="modified residue" description="Phosphothreonine; by MAPK1 and MAPK3" evidence="3">
    <location>
        <position position="896"/>
    </location>
</feature>
<feature type="splice variant" id="VSP_007658" description="In isoform 2." evidence="12">
    <location>
        <begin position="1"/>
        <end position="96"/>
    </location>
</feature>
<feature type="splice variant" id="VSP_007659" description="In isoform 2 and isoform 3." evidence="11 12 13 14">
    <original>Q</original>
    <variation>QNSGAHDGHPPSFSPHSSSLHPPFSGAQADSSHGAGGNPCPKSPCVQQK</variation>
    <location>
        <position position="686"/>
    </location>
</feature>
<feature type="splice variant" id="VSP_007660" description="In isoform 2." evidence="12">
    <original>QMT</original>
    <variation>VTM</variation>
    <location>
        <begin position="730"/>
        <end position="732"/>
    </location>
</feature>
<feature type="splice variant" id="VSP_007661" description="In isoform 2." evidence="12">
    <location>
        <begin position="733"/>
        <end position="938"/>
    </location>
</feature>
<feature type="sequence variant" id="VAR_083482" description="In MGBL; loss of function in transcriptional activation." evidence="10">
    <location>
        <begin position="115"/>
        <end position="938"/>
    </location>
</feature>
<feature type="sequence variant" id="VAR_083483" description="In MGBL; uncertain significance; decreased function in transcriptional activation; dbSNP:rs1597809206." evidence="10">
    <original>E</original>
    <variation>G</variation>
    <location>
        <position position="530"/>
    </location>
</feature>
<evidence type="ECO:0000250" key="1"/>
<evidence type="ECO:0000250" key="2">
    <source>
        <dbReference type="UniProtKB" id="Q8R5I7"/>
    </source>
</evidence>
<evidence type="ECO:0000250" key="3">
    <source>
        <dbReference type="UniProtKB" id="Q8VIM5"/>
    </source>
</evidence>
<evidence type="ECO:0000255" key="4"/>
<evidence type="ECO:0000255" key="5">
    <source>
        <dbReference type="PROSITE-ProRule" id="PRU00186"/>
    </source>
</evidence>
<evidence type="ECO:0000256" key="6">
    <source>
        <dbReference type="SAM" id="MobiDB-lite"/>
    </source>
</evidence>
<evidence type="ECO:0000269" key="7">
    <source>
    </source>
</evidence>
<evidence type="ECO:0000269" key="8">
    <source>
    </source>
</evidence>
<evidence type="ECO:0000269" key="9">
    <source>
    </source>
</evidence>
<evidence type="ECO:0000269" key="10">
    <source>
    </source>
</evidence>
<evidence type="ECO:0000303" key="11">
    <source>
    </source>
</evidence>
<evidence type="ECO:0000303" key="12">
    <source>
    </source>
</evidence>
<evidence type="ECO:0000303" key="13">
    <source>
    </source>
</evidence>
<evidence type="ECO:0000303" key="14">
    <source>
    </source>
</evidence>
<protein>
    <recommendedName>
        <fullName>Myocardin</fullName>
    </recommendedName>
</protein>
<dbReference type="EMBL" id="AF532596">
    <property type="protein sequence ID" value="AAN33040.1"/>
    <property type="molecule type" value="mRNA"/>
</dbReference>
<dbReference type="EMBL" id="AY764180">
    <property type="protein sequence ID" value="AAV33439.1"/>
    <property type="molecule type" value="mRNA"/>
</dbReference>
<dbReference type="EMBL" id="AK292885">
    <property type="protein sequence ID" value="BAF85574.1"/>
    <property type="molecule type" value="mRNA"/>
</dbReference>
<dbReference type="EMBL" id="AK097821">
    <property type="protein sequence ID" value="BAC05177.1"/>
    <property type="molecule type" value="mRNA"/>
</dbReference>
<dbReference type="EMBL" id="AC005358">
    <property type="status" value="NOT_ANNOTATED_CDS"/>
    <property type="molecule type" value="Genomic_DNA"/>
</dbReference>
<dbReference type="EMBL" id="BC126307">
    <property type="protein sequence ID" value="AAI26308.1"/>
    <property type="molecule type" value="mRNA"/>
</dbReference>
<dbReference type="EMBL" id="BC143391">
    <property type="protein sequence ID" value="AAI43392.1"/>
    <property type="molecule type" value="mRNA"/>
</dbReference>
<dbReference type="CCDS" id="CCDS11163.1">
    <molecule id="Q8IZQ8-1"/>
</dbReference>
<dbReference type="CCDS" id="CCDS54091.1">
    <molecule id="Q8IZQ8-3"/>
</dbReference>
<dbReference type="RefSeq" id="NP_001139784.1">
    <molecule id="Q8IZQ8-3"/>
    <property type="nucleotide sequence ID" value="NM_001146312.3"/>
</dbReference>
<dbReference type="RefSeq" id="NP_705832.1">
    <molecule id="Q8IZQ8-1"/>
    <property type="nucleotide sequence ID" value="NM_153604.4"/>
</dbReference>
<dbReference type="SMR" id="Q8IZQ8"/>
<dbReference type="BioGRID" id="125044">
    <property type="interactions" value="17"/>
</dbReference>
<dbReference type="CORUM" id="Q8IZQ8"/>
<dbReference type="FunCoup" id="Q8IZQ8">
    <property type="interactions" value="1084"/>
</dbReference>
<dbReference type="IntAct" id="Q8IZQ8">
    <property type="interactions" value="3"/>
</dbReference>
<dbReference type="STRING" id="9606.ENSP00000401678"/>
<dbReference type="GlyGen" id="Q8IZQ8">
    <property type="glycosylation" value="1 site"/>
</dbReference>
<dbReference type="iPTMnet" id="Q8IZQ8"/>
<dbReference type="PhosphoSitePlus" id="Q8IZQ8"/>
<dbReference type="BioMuta" id="MYOCD"/>
<dbReference type="DMDM" id="32363335"/>
<dbReference type="jPOST" id="Q8IZQ8"/>
<dbReference type="MassIVE" id="Q8IZQ8"/>
<dbReference type="PaxDb" id="9606-ENSP00000401678"/>
<dbReference type="PeptideAtlas" id="Q8IZQ8"/>
<dbReference type="ProteomicsDB" id="71407">
    <molecule id="Q8IZQ8-1"/>
</dbReference>
<dbReference type="ProteomicsDB" id="71408">
    <molecule id="Q8IZQ8-2"/>
</dbReference>
<dbReference type="ProteomicsDB" id="71409">
    <molecule id="Q8IZQ8-3"/>
</dbReference>
<dbReference type="Pumba" id="Q8IZQ8"/>
<dbReference type="Antibodypedia" id="25055">
    <property type="antibodies" value="125 antibodies from 25 providers"/>
</dbReference>
<dbReference type="DNASU" id="93649"/>
<dbReference type="Ensembl" id="ENST00000343344.8">
    <molecule id="Q8IZQ8-1"/>
    <property type="protein sequence ID" value="ENSP00000341835.4"/>
    <property type="gene ID" value="ENSG00000141052.18"/>
</dbReference>
<dbReference type="Ensembl" id="ENST00000425538.6">
    <molecule id="Q8IZQ8-3"/>
    <property type="protein sequence ID" value="ENSP00000401678.1"/>
    <property type="gene ID" value="ENSG00000141052.18"/>
</dbReference>
<dbReference type="GeneID" id="93649"/>
<dbReference type="KEGG" id="hsa:93649"/>
<dbReference type="MANE-Select" id="ENST00000425538.6">
    <molecule id="Q8IZQ8-3"/>
    <property type="protein sequence ID" value="ENSP00000401678.1"/>
    <property type="RefSeq nucleotide sequence ID" value="NM_001146312.3"/>
    <property type="RefSeq protein sequence ID" value="NP_001139784.1"/>
</dbReference>
<dbReference type="UCSC" id="uc002gnn.4">
    <molecule id="Q8IZQ8-1"/>
    <property type="organism name" value="human"/>
</dbReference>
<dbReference type="AGR" id="HGNC:16067"/>
<dbReference type="CTD" id="93649"/>
<dbReference type="DisGeNET" id="93649"/>
<dbReference type="GeneCards" id="MYOCD"/>
<dbReference type="HGNC" id="HGNC:16067">
    <property type="gene designation" value="MYOCD"/>
</dbReference>
<dbReference type="HPA" id="ENSG00000141052">
    <property type="expression patterns" value="Tissue enhanced (intestine)"/>
</dbReference>
<dbReference type="MalaCards" id="MYOCD"/>
<dbReference type="MIM" id="606127">
    <property type="type" value="gene"/>
</dbReference>
<dbReference type="MIM" id="618719">
    <property type="type" value="phenotype"/>
</dbReference>
<dbReference type="neXtProt" id="NX_Q8IZQ8"/>
<dbReference type="OpenTargets" id="ENSG00000141052"/>
<dbReference type="PharmGKB" id="PA134946896"/>
<dbReference type="VEuPathDB" id="HostDB:ENSG00000141052"/>
<dbReference type="eggNOG" id="ENOG502QTAN">
    <property type="taxonomic scope" value="Eukaryota"/>
</dbReference>
<dbReference type="GeneTree" id="ENSGT00950000182979"/>
<dbReference type="HOGENOM" id="CLU_007042_2_0_1"/>
<dbReference type="InParanoid" id="Q8IZQ8"/>
<dbReference type="OMA" id="PLPFEHC"/>
<dbReference type="OrthoDB" id="197676at2759"/>
<dbReference type="PAN-GO" id="Q8IZQ8">
    <property type="GO annotations" value="5 GO annotations based on evolutionary models"/>
</dbReference>
<dbReference type="PhylomeDB" id="Q8IZQ8"/>
<dbReference type="TreeFam" id="TF326024"/>
<dbReference type="PathwayCommons" id="Q8IZQ8"/>
<dbReference type="Reactome" id="R-HSA-9733709">
    <property type="pathway name" value="Cardiogenesis"/>
</dbReference>
<dbReference type="SignaLink" id="Q8IZQ8"/>
<dbReference type="SIGNOR" id="Q8IZQ8"/>
<dbReference type="BioGRID-ORCS" id="93649">
    <property type="hits" value="14 hits in 1156 CRISPR screens"/>
</dbReference>
<dbReference type="ChiTaRS" id="MYOCD">
    <property type="organism name" value="human"/>
</dbReference>
<dbReference type="GeneWiki" id="MYOCD"/>
<dbReference type="GenomeRNAi" id="93649"/>
<dbReference type="Pharos" id="Q8IZQ8">
    <property type="development level" value="Tbio"/>
</dbReference>
<dbReference type="PRO" id="PR:Q8IZQ8"/>
<dbReference type="Proteomes" id="UP000005640">
    <property type="component" value="Chromosome 17"/>
</dbReference>
<dbReference type="RNAct" id="Q8IZQ8">
    <property type="molecule type" value="protein"/>
</dbReference>
<dbReference type="Bgee" id="ENSG00000141052">
    <property type="expression patterns" value="Expressed in cauda epididymis and 135 other cell types or tissues"/>
</dbReference>
<dbReference type="ExpressionAtlas" id="Q8IZQ8">
    <property type="expression patterns" value="baseline and differential"/>
</dbReference>
<dbReference type="GO" id="GO:0000785">
    <property type="term" value="C:chromatin"/>
    <property type="evidence" value="ECO:0007669"/>
    <property type="project" value="Ensembl"/>
</dbReference>
<dbReference type="GO" id="GO:0005634">
    <property type="term" value="C:nucleus"/>
    <property type="evidence" value="ECO:0000314"/>
    <property type="project" value="BHF-UCL"/>
</dbReference>
<dbReference type="GO" id="GO:0140297">
    <property type="term" value="F:DNA-binding transcription factor binding"/>
    <property type="evidence" value="ECO:0000353"/>
    <property type="project" value="UniProtKB"/>
</dbReference>
<dbReference type="GO" id="GO:0035035">
    <property type="term" value="F:histone acetyltransferase binding"/>
    <property type="evidence" value="ECO:0007669"/>
    <property type="project" value="Ensembl"/>
</dbReference>
<dbReference type="GO" id="GO:0042826">
    <property type="term" value="F:histone deacetylase binding"/>
    <property type="evidence" value="ECO:0007669"/>
    <property type="project" value="Ensembl"/>
</dbReference>
<dbReference type="GO" id="GO:0070412">
    <property type="term" value="F:R-SMAD binding"/>
    <property type="evidence" value="ECO:0007669"/>
    <property type="project" value="Ensembl"/>
</dbReference>
<dbReference type="GO" id="GO:0061629">
    <property type="term" value="F:RNA polymerase II-specific DNA-binding transcription factor binding"/>
    <property type="evidence" value="ECO:0000250"/>
    <property type="project" value="BHF-UCL"/>
</dbReference>
<dbReference type="GO" id="GO:0003713">
    <property type="term" value="F:transcription coactivator activity"/>
    <property type="evidence" value="ECO:0000314"/>
    <property type="project" value="UniProtKB"/>
</dbReference>
<dbReference type="GO" id="GO:0010659">
    <property type="term" value="P:cardiac muscle cell apoptotic process"/>
    <property type="evidence" value="ECO:0007669"/>
    <property type="project" value="Ensembl"/>
</dbReference>
<dbReference type="GO" id="GO:0055007">
    <property type="term" value="P:cardiac muscle cell differentiation"/>
    <property type="evidence" value="ECO:0000250"/>
    <property type="project" value="BHF-UCL"/>
</dbReference>
<dbReference type="GO" id="GO:0060379">
    <property type="term" value="P:cardiac muscle cell myoblast differentiation"/>
    <property type="evidence" value="ECO:0000314"/>
    <property type="project" value="BHF-UCL"/>
</dbReference>
<dbReference type="GO" id="GO:0060947">
    <property type="term" value="P:cardiac vascular smooth muscle cell differentiation"/>
    <property type="evidence" value="ECO:0000250"/>
    <property type="project" value="BHF-UCL"/>
</dbReference>
<dbReference type="GO" id="GO:0003231">
    <property type="term" value="P:cardiac ventricle development"/>
    <property type="evidence" value="ECO:0007669"/>
    <property type="project" value="Ensembl"/>
</dbReference>
<dbReference type="GO" id="GO:0035051">
    <property type="term" value="P:cardiocyte differentiation"/>
    <property type="evidence" value="ECO:0000303"/>
    <property type="project" value="UniProtKB"/>
</dbReference>
<dbReference type="GO" id="GO:0043954">
    <property type="term" value="P:cellular component maintenance"/>
    <property type="evidence" value="ECO:0007669"/>
    <property type="project" value="Ensembl"/>
</dbReference>
<dbReference type="GO" id="GO:0048565">
    <property type="term" value="P:digestive tract development"/>
    <property type="evidence" value="ECO:0007669"/>
    <property type="project" value="Ensembl"/>
</dbReference>
<dbReference type="GO" id="GO:0097070">
    <property type="term" value="P:ductus arteriosus closure"/>
    <property type="evidence" value="ECO:0007669"/>
    <property type="project" value="Ensembl"/>
</dbReference>
<dbReference type="GO" id="GO:0048286">
    <property type="term" value="P:lung alveolus development"/>
    <property type="evidence" value="ECO:0007669"/>
    <property type="project" value="Ensembl"/>
</dbReference>
<dbReference type="GO" id="GO:1900222">
    <property type="term" value="P:negative regulation of amyloid-beta clearance"/>
    <property type="evidence" value="ECO:0000315"/>
    <property type="project" value="BHF-UCL"/>
</dbReference>
<dbReference type="GO" id="GO:0010667">
    <property type="term" value="P:negative regulation of cardiac muscle cell apoptotic process"/>
    <property type="evidence" value="ECO:0007669"/>
    <property type="project" value="Ensembl"/>
</dbReference>
<dbReference type="GO" id="GO:0060354">
    <property type="term" value="P:negative regulation of cell adhesion molecule production"/>
    <property type="evidence" value="ECO:0007669"/>
    <property type="project" value="Ensembl"/>
</dbReference>
<dbReference type="GO" id="GO:0008285">
    <property type="term" value="P:negative regulation of cell population proliferation"/>
    <property type="evidence" value="ECO:0000314"/>
    <property type="project" value="BHF-UCL"/>
</dbReference>
<dbReference type="GO" id="GO:0010832">
    <property type="term" value="P:negative regulation of myotube differentiation"/>
    <property type="evidence" value="ECO:0007669"/>
    <property type="project" value="Ensembl"/>
</dbReference>
<dbReference type="GO" id="GO:2000587">
    <property type="term" value="P:negative regulation of platelet-derived growth factor receptor-beta signaling pathway"/>
    <property type="evidence" value="ECO:0007669"/>
    <property type="project" value="Ensembl"/>
</dbReference>
<dbReference type="GO" id="GO:2001015">
    <property type="term" value="P:negative regulation of skeletal muscle cell differentiation"/>
    <property type="evidence" value="ECO:0000314"/>
    <property type="project" value="BHF-UCL"/>
</dbReference>
<dbReference type="GO" id="GO:0000122">
    <property type="term" value="P:negative regulation of transcription by RNA polymerase II"/>
    <property type="evidence" value="ECO:0007669"/>
    <property type="project" value="Ensembl"/>
</dbReference>
<dbReference type="GO" id="GO:1904753">
    <property type="term" value="P:negative regulation of vascular associated smooth muscle cell migration"/>
    <property type="evidence" value="ECO:0007669"/>
    <property type="project" value="Ensembl"/>
</dbReference>
<dbReference type="GO" id="GO:1904706">
    <property type="term" value="P:negative regulation of vascular associated smooth muscle cell proliferation"/>
    <property type="evidence" value="ECO:0007669"/>
    <property type="project" value="Ensembl"/>
</dbReference>
<dbReference type="GO" id="GO:2000727">
    <property type="term" value="P:positive regulation of cardiac muscle cell differentiation"/>
    <property type="evidence" value="ECO:0000314"/>
    <property type="project" value="BHF-UCL"/>
</dbReference>
<dbReference type="GO" id="GO:0008284">
    <property type="term" value="P:positive regulation of cell population proliferation"/>
    <property type="evidence" value="ECO:0007669"/>
    <property type="project" value="Ensembl"/>
</dbReference>
<dbReference type="GO" id="GO:0045893">
    <property type="term" value="P:positive regulation of DNA-templated transcription"/>
    <property type="evidence" value="ECO:0000314"/>
    <property type="project" value="UniProtKB"/>
</dbReference>
<dbReference type="GO" id="GO:1902895">
    <property type="term" value="P:positive regulation of miRNA transcription"/>
    <property type="evidence" value="ECO:0007669"/>
    <property type="project" value="Ensembl"/>
</dbReference>
<dbReference type="GO" id="GO:0051152">
    <property type="term" value="P:positive regulation of smooth muscle cell differentiation"/>
    <property type="evidence" value="ECO:0000314"/>
    <property type="project" value="BHF-UCL"/>
</dbReference>
<dbReference type="GO" id="GO:0045987">
    <property type="term" value="P:positive regulation of smooth muscle contraction"/>
    <property type="evidence" value="ECO:0000314"/>
    <property type="project" value="BHF-UCL"/>
</dbReference>
<dbReference type="GO" id="GO:0045944">
    <property type="term" value="P:positive regulation of transcription by RNA polymerase II"/>
    <property type="evidence" value="ECO:0000314"/>
    <property type="project" value="BHF-UCL"/>
</dbReference>
<dbReference type="GO" id="GO:0030511">
    <property type="term" value="P:positive regulation of transforming growth factor beta receptor signaling pathway"/>
    <property type="evidence" value="ECO:0007669"/>
    <property type="project" value="Ensembl"/>
</dbReference>
<dbReference type="GO" id="GO:0001560">
    <property type="term" value="P:regulation of cell growth by extracellular stimulus"/>
    <property type="evidence" value="ECO:0007669"/>
    <property type="project" value="Ensembl"/>
</dbReference>
<dbReference type="GO" id="GO:0045661">
    <property type="term" value="P:regulation of myoblast differentiation"/>
    <property type="evidence" value="ECO:0007669"/>
    <property type="project" value="Ensembl"/>
</dbReference>
<dbReference type="GO" id="GO:1900239">
    <property type="term" value="P:regulation of phenotypic switching"/>
    <property type="evidence" value="ECO:0007669"/>
    <property type="project" value="Ensembl"/>
</dbReference>
<dbReference type="GO" id="GO:0051150">
    <property type="term" value="P:regulation of smooth muscle cell differentiation"/>
    <property type="evidence" value="ECO:0000304"/>
    <property type="project" value="BHF-UCL"/>
</dbReference>
<dbReference type="GO" id="GO:0001666">
    <property type="term" value="P:response to hypoxia"/>
    <property type="evidence" value="ECO:0000315"/>
    <property type="project" value="BHF-UCL"/>
</dbReference>
<dbReference type="GO" id="GO:0051145">
    <property type="term" value="P:smooth muscle cell differentiation"/>
    <property type="evidence" value="ECO:0000314"/>
    <property type="project" value="BHF-UCL"/>
</dbReference>
<dbReference type="GO" id="GO:0045815">
    <property type="term" value="P:transcription initiation-coupled chromatin remodeling"/>
    <property type="evidence" value="ECO:0000250"/>
    <property type="project" value="UniProtKB"/>
</dbReference>
<dbReference type="GO" id="GO:0060157">
    <property type="term" value="P:urinary bladder development"/>
    <property type="evidence" value="ECO:0000315"/>
    <property type="project" value="UniProtKB"/>
</dbReference>
<dbReference type="GO" id="GO:0060065">
    <property type="term" value="P:uterus development"/>
    <property type="evidence" value="ECO:0007669"/>
    <property type="project" value="Ensembl"/>
</dbReference>
<dbReference type="GO" id="GO:0001570">
    <property type="term" value="P:vasculogenesis"/>
    <property type="evidence" value="ECO:0007669"/>
    <property type="project" value="Ensembl"/>
</dbReference>
<dbReference type="GO" id="GO:0055012">
    <property type="term" value="P:ventricular cardiac muscle cell differentiation"/>
    <property type="evidence" value="ECO:0007669"/>
    <property type="project" value="Ensembl"/>
</dbReference>
<dbReference type="FunFam" id="1.10.720.30:FF:000008">
    <property type="entry name" value="Myocardin"/>
    <property type="match status" value="1"/>
</dbReference>
<dbReference type="Gene3D" id="6.10.140.2040">
    <property type="match status" value="1"/>
</dbReference>
<dbReference type="Gene3D" id="6.10.150.10">
    <property type="match status" value="1"/>
</dbReference>
<dbReference type="Gene3D" id="1.10.720.30">
    <property type="entry name" value="SAP domain"/>
    <property type="match status" value="1"/>
</dbReference>
<dbReference type="InterPro" id="IPR043451">
    <property type="entry name" value="Myocardin-like"/>
</dbReference>
<dbReference type="InterPro" id="IPR004018">
    <property type="entry name" value="RPEL_repeat"/>
</dbReference>
<dbReference type="InterPro" id="IPR003034">
    <property type="entry name" value="SAP_dom"/>
</dbReference>
<dbReference type="InterPro" id="IPR036361">
    <property type="entry name" value="SAP_dom_sf"/>
</dbReference>
<dbReference type="PANTHER" id="PTHR22793:SF11">
    <property type="entry name" value="MYOCARDIN"/>
    <property type="match status" value="1"/>
</dbReference>
<dbReference type="PANTHER" id="PTHR22793">
    <property type="entry name" value="MYOCARDIN-RELATED TRANSCRIPTION FACTOR-RELATED"/>
    <property type="match status" value="1"/>
</dbReference>
<dbReference type="Pfam" id="PF02755">
    <property type="entry name" value="RPEL"/>
    <property type="match status" value="1"/>
</dbReference>
<dbReference type="Pfam" id="PF02037">
    <property type="entry name" value="SAP"/>
    <property type="match status" value="1"/>
</dbReference>
<dbReference type="SMART" id="SM00707">
    <property type="entry name" value="RPEL"/>
    <property type="match status" value="3"/>
</dbReference>
<dbReference type="SMART" id="SM00513">
    <property type="entry name" value="SAP"/>
    <property type="match status" value="1"/>
</dbReference>
<dbReference type="SUPFAM" id="SSF68906">
    <property type="entry name" value="SAP domain"/>
    <property type="match status" value="1"/>
</dbReference>
<dbReference type="PROSITE" id="PS51073">
    <property type="entry name" value="RPEL"/>
    <property type="match status" value="3"/>
</dbReference>
<dbReference type="PROSITE" id="PS50800">
    <property type="entry name" value="SAP"/>
    <property type="match status" value="1"/>
</dbReference>
<reference key="1">
    <citation type="journal article" date="2002" name="Proc. Natl. Acad. Sci. U.S.A.">
        <title>Potentiation of serum response factor activity by a family of myocardin-related transcription factors.</title>
        <authorList>
            <person name="Wang D.-Z."/>
            <person name="Li S."/>
            <person name="Hockemeyer D."/>
            <person name="Sutherland L."/>
            <person name="Wang Z."/>
            <person name="Schratt G."/>
            <person name="Richardson J.A."/>
            <person name="Nordheim A."/>
            <person name="Olson E.N."/>
        </authorList>
    </citation>
    <scope>NUCLEOTIDE SEQUENCE [MRNA] (ISOFORM 1)</scope>
</reference>
<reference key="2">
    <citation type="journal article" date="2003" name="Mol. Cell. Biol.">
        <title>Myocardin is a critical serum response factor cofactor in the transcriptional program regulating smooth muscle cell differentiation.</title>
        <authorList>
            <person name="Du K.L."/>
            <person name="Ip H.S."/>
            <person name="Li J."/>
            <person name="Chen M."/>
            <person name="Dandre F."/>
            <person name="Yu W."/>
            <person name="Lu M.M."/>
            <person name="Owens G.K."/>
            <person name="Parmacek M.S."/>
        </authorList>
    </citation>
    <scope>NUCLEOTIDE SEQUENCE [MRNA] (ISOFORM 3)</scope>
    <scope>FUNCTION</scope>
    <scope>TISSUE SPECIFICITY</scope>
    <source>
        <tissue>Heart</tissue>
    </source>
</reference>
<reference key="3">
    <citation type="journal article" date="2005" name="Cardiovasc. Res.">
        <title>Activation of cardiac and smooth muscle-specific genes in primary human cells after forced expression of human myocardin.</title>
        <authorList>
            <person name="van Tuyn J."/>
            <person name="Knaan-Shanzer S."/>
            <person name="van de Watering M.J."/>
            <person name="de Graaf M."/>
            <person name="van der Laarse A."/>
            <person name="Schalij M.J."/>
            <person name="van der Wall E.E."/>
            <person name="de Vries A.A."/>
            <person name="Atsma D.E."/>
        </authorList>
    </citation>
    <scope>NUCLEOTIDE SEQUENCE [MRNA] (ISOFORM 3)</scope>
</reference>
<reference key="4">
    <citation type="journal article" date="2004" name="Nat. Genet.">
        <title>Complete sequencing and characterization of 21,243 full-length human cDNAs.</title>
        <authorList>
            <person name="Ota T."/>
            <person name="Suzuki Y."/>
            <person name="Nishikawa T."/>
            <person name="Otsuki T."/>
            <person name="Sugiyama T."/>
            <person name="Irie R."/>
            <person name="Wakamatsu A."/>
            <person name="Hayashi K."/>
            <person name="Sato H."/>
            <person name="Nagai K."/>
            <person name="Kimura K."/>
            <person name="Makita H."/>
            <person name="Sekine M."/>
            <person name="Obayashi M."/>
            <person name="Nishi T."/>
            <person name="Shibahara T."/>
            <person name="Tanaka T."/>
            <person name="Ishii S."/>
            <person name="Yamamoto J."/>
            <person name="Saito K."/>
            <person name="Kawai Y."/>
            <person name="Isono Y."/>
            <person name="Nakamura Y."/>
            <person name="Nagahari K."/>
            <person name="Murakami K."/>
            <person name="Yasuda T."/>
            <person name="Iwayanagi T."/>
            <person name="Wagatsuma M."/>
            <person name="Shiratori A."/>
            <person name="Sudo H."/>
            <person name="Hosoiri T."/>
            <person name="Kaku Y."/>
            <person name="Kodaira H."/>
            <person name="Kondo H."/>
            <person name="Sugawara M."/>
            <person name="Takahashi M."/>
            <person name="Kanda K."/>
            <person name="Yokoi T."/>
            <person name="Furuya T."/>
            <person name="Kikkawa E."/>
            <person name="Omura Y."/>
            <person name="Abe K."/>
            <person name="Kamihara K."/>
            <person name="Katsuta N."/>
            <person name="Sato K."/>
            <person name="Tanikawa M."/>
            <person name="Yamazaki M."/>
            <person name="Ninomiya K."/>
            <person name="Ishibashi T."/>
            <person name="Yamashita H."/>
            <person name="Murakawa K."/>
            <person name="Fujimori K."/>
            <person name="Tanai H."/>
            <person name="Kimata M."/>
            <person name="Watanabe M."/>
            <person name="Hiraoka S."/>
            <person name="Chiba Y."/>
            <person name="Ishida S."/>
            <person name="Ono Y."/>
            <person name="Takiguchi S."/>
            <person name="Watanabe S."/>
            <person name="Yosida M."/>
            <person name="Hotuta T."/>
            <person name="Kusano J."/>
            <person name="Kanehori K."/>
            <person name="Takahashi-Fujii A."/>
            <person name="Hara H."/>
            <person name="Tanase T.-O."/>
            <person name="Nomura Y."/>
            <person name="Togiya S."/>
            <person name="Komai F."/>
            <person name="Hara R."/>
            <person name="Takeuchi K."/>
            <person name="Arita M."/>
            <person name="Imose N."/>
            <person name="Musashino K."/>
            <person name="Yuuki H."/>
            <person name="Oshima A."/>
            <person name="Sasaki N."/>
            <person name="Aotsuka S."/>
            <person name="Yoshikawa Y."/>
            <person name="Matsunawa H."/>
            <person name="Ichihara T."/>
            <person name="Shiohata N."/>
            <person name="Sano S."/>
            <person name="Moriya S."/>
            <person name="Momiyama H."/>
            <person name="Satoh N."/>
            <person name="Takami S."/>
            <person name="Terashima Y."/>
            <person name="Suzuki O."/>
            <person name="Nakagawa S."/>
            <person name="Senoh A."/>
            <person name="Mizoguchi H."/>
            <person name="Goto Y."/>
            <person name="Shimizu F."/>
            <person name="Wakebe H."/>
            <person name="Hishigaki H."/>
            <person name="Watanabe T."/>
            <person name="Sugiyama A."/>
            <person name="Takemoto M."/>
            <person name="Kawakami B."/>
            <person name="Yamazaki M."/>
            <person name="Watanabe K."/>
            <person name="Kumagai A."/>
            <person name="Itakura S."/>
            <person name="Fukuzumi Y."/>
            <person name="Fujimori Y."/>
            <person name="Komiyama M."/>
            <person name="Tashiro H."/>
            <person name="Tanigami A."/>
            <person name="Fujiwara T."/>
            <person name="Ono T."/>
            <person name="Yamada K."/>
            <person name="Fujii Y."/>
            <person name="Ozaki K."/>
            <person name="Hirao M."/>
            <person name="Ohmori Y."/>
            <person name="Kawabata A."/>
            <person name="Hikiji T."/>
            <person name="Kobatake N."/>
            <person name="Inagaki H."/>
            <person name="Ikema Y."/>
            <person name="Okamoto S."/>
            <person name="Okitani R."/>
            <person name="Kawakami T."/>
            <person name="Noguchi S."/>
            <person name="Itoh T."/>
            <person name="Shigeta K."/>
            <person name="Senba T."/>
            <person name="Matsumura K."/>
            <person name="Nakajima Y."/>
            <person name="Mizuno T."/>
            <person name="Morinaga M."/>
            <person name="Sasaki M."/>
            <person name="Togashi T."/>
            <person name="Oyama M."/>
            <person name="Hata H."/>
            <person name="Watanabe M."/>
            <person name="Komatsu T."/>
            <person name="Mizushima-Sugano J."/>
            <person name="Satoh T."/>
            <person name="Shirai Y."/>
            <person name="Takahashi Y."/>
            <person name="Nakagawa K."/>
            <person name="Okumura K."/>
            <person name="Nagase T."/>
            <person name="Nomura N."/>
            <person name="Kikuchi H."/>
            <person name="Masuho Y."/>
            <person name="Yamashita R."/>
            <person name="Nakai K."/>
            <person name="Yada T."/>
            <person name="Nakamura Y."/>
            <person name="Ohara O."/>
            <person name="Isogai T."/>
            <person name="Sugano S."/>
        </authorList>
    </citation>
    <scope>NUCLEOTIDE SEQUENCE [LARGE SCALE MRNA] (ISOFORMS 2 AND 3)</scope>
    <source>
        <tissue>Testis</tissue>
    </source>
</reference>
<reference key="5">
    <citation type="journal article" date="2006" name="Nature">
        <title>DNA sequence of human chromosome 17 and analysis of rearrangement in the human lineage.</title>
        <authorList>
            <person name="Zody M.C."/>
            <person name="Garber M."/>
            <person name="Adams D.J."/>
            <person name="Sharpe T."/>
            <person name="Harrow J."/>
            <person name="Lupski J.R."/>
            <person name="Nicholson C."/>
            <person name="Searle S.M."/>
            <person name="Wilming L."/>
            <person name="Young S.K."/>
            <person name="Abouelleil A."/>
            <person name="Allen N.R."/>
            <person name="Bi W."/>
            <person name="Bloom T."/>
            <person name="Borowsky M.L."/>
            <person name="Bugalter B.E."/>
            <person name="Butler J."/>
            <person name="Chang J.L."/>
            <person name="Chen C.-K."/>
            <person name="Cook A."/>
            <person name="Corum B."/>
            <person name="Cuomo C.A."/>
            <person name="de Jong P.J."/>
            <person name="DeCaprio D."/>
            <person name="Dewar K."/>
            <person name="FitzGerald M."/>
            <person name="Gilbert J."/>
            <person name="Gibson R."/>
            <person name="Gnerre S."/>
            <person name="Goldstein S."/>
            <person name="Grafham D.V."/>
            <person name="Grocock R."/>
            <person name="Hafez N."/>
            <person name="Hagopian D.S."/>
            <person name="Hart E."/>
            <person name="Norman C.H."/>
            <person name="Humphray S."/>
            <person name="Jaffe D.B."/>
            <person name="Jones M."/>
            <person name="Kamal M."/>
            <person name="Khodiyar V.K."/>
            <person name="LaButti K."/>
            <person name="Laird G."/>
            <person name="Lehoczky J."/>
            <person name="Liu X."/>
            <person name="Lokyitsang T."/>
            <person name="Loveland J."/>
            <person name="Lui A."/>
            <person name="Macdonald P."/>
            <person name="Major J.E."/>
            <person name="Matthews L."/>
            <person name="Mauceli E."/>
            <person name="McCarroll S.A."/>
            <person name="Mihalev A.H."/>
            <person name="Mudge J."/>
            <person name="Nguyen C."/>
            <person name="Nicol R."/>
            <person name="O'Leary S.B."/>
            <person name="Osoegawa K."/>
            <person name="Schwartz D.C."/>
            <person name="Shaw-Smith C."/>
            <person name="Stankiewicz P."/>
            <person name="Steward C."/>
            <person name="Swarbreck D."/>
            <person name="Venkataraman V."/>
            <person name="Whittaker C.A."/>
            <person name="Yang X."/>
            <person name="Zimmer A.R."/>
            <person name="Bradley A."/>
            <person name="Hubbard T."/>
            <person name="Birren B.W."/>
            <person name="Rogers J."/>
            <person name="Lander E.S."/>
            <person name="Nusbaum C."/>
        </authorList>
    </citation>
    <scope>NUCLEOTIDE SEQUENCE [LARGE SCALE GENOMIC DNA]</scope>
</reference>
<reference key="6">
    <citation type="journal article" date="2004" name="Genome Res.">
        <title>The status, quality, and expansion of the NIH full-length cDNA project: the Mammalian Gene Collection (MGC).</title>
        <authorList>
            <consortium name="The MGC Project Team"/>
        </authorList>
    </citation>
    <scope>NUCLEOTIDE SEQUENCE [LARGE SCALE MRNA] (ISOFORM 3)</scope>
</reference>
<reference key="7">
    <citation type="journal article" date="2003" name="J. Mol. Med.">
        <title>Myocardin mRNA is augmented in the failing myocardium: expression profiling in the porcine model and human dilated cardiomyopathy.</title>
        <authorList>
            <person name="Torrado M."/>
            <person name="Lopez E."/>
            <person name="Centeno A."/>
            <person name="Medrano C."/>
            <person name="Castro-Beiras A."/>
            <person name="Mikhailov A.T."/>
        </authorList>
    </citation>
    <scope>ALTERNATIVE SPLICING (ISOFORMS 1; 2 AND 3)</scope>
    <scope>INDUCTION BY HEART FAILURE</scope>
</reference>
<reference key="8">
    <citation type="journal article" date="2005" name="Dev. Cell">
        <title>Phenotypic modulation of smooth muscle cells through interaction of Foxo4 and myocardin.</title>
        <authorList>
            <person name="Liu Z.-P."/>
            <person name="Wang Z."/>
            <person name="Yanagisawa H."/>
            <person name="Olson E.N."/>
        </authorList>
    </citation>
    <scope>INTERACTION WITH MLLT7</scope>
</reference>
<reference key="9">
    <citation type="journal article" date="2010" name="Gene">
        <title>Expression and functional activity of four myocardin isoforms.</title>
        <authorList>
            <person name="Imamura M."/>
            <person name="Long X."/>
            <person name="Nanda V."/>
            <person name="Miano J.M."/>
        </authorList>
    </citation>
    <scope>TISSUE SPECIFICITY</scope>
</reference>
<reference key="10">
    <citation type="journal article" date="2019" name="J. Clin. Invest.">
        <title>Loss-of-function variants in myocardin cause congenital megabladder in humans and mice.</title>
        <authorList>
            <person name="Houweling A.C."/>
            <person name="Beaman G.M."/>
            <person name="Postma A.V."/>
            <person name="Gainous T.B."/>
            <person name="Lichtenbelt K.D."/>
            <person name="Brancati F."/>
            <person name="Lopes F.M."/>
            <person name="van der Made I."/>
            <person name="Polstra A.M."/>
            <person name="Robinson M.L."/>
            <person name="Wright K.D."/>
            <person name="Ellingford J.M."/>
            <person name="Jackson A.R."/>
            <person name="Overwater E."/>
            <person name="Genesio R."/>
            <person name="Romano S."/>
            <person name="Camerota L."/>
            <person name="D'Angelo E."/>
            <person name="Meijers-Heijboer E.J."/>
            <person name="Christoffels V.M."/>
            <person name="McHugh K.M."/>
            <person name="Black B.L."/>
            <person name="Newman W.G."/>
            <person name="Woolf A.S."/>
            <person name="Creemers E.E."/>
        </authorList>
    </citation>
    <scope>INVOLVEMENT IN MGBL</scope>
    <scope>FUNCTION</scope>
    <scope>VARIANTS MGBL 115-ARG--TRP-938 DEL AND GLY-530</scope>
    <scope>CHARACTERIZATION OF VARIANTS MGBL 115-ARG--TRP-938 DEL AND GLY-530</scope>
</reference>
<gene>
    <name type="primary">MYOCD</name>
    <name type="synonym">MYCD</name>
</gene>
<sequence>MTLLGSEHSLLIRSKFRSVLQLRLQQRRTQEQLANQGIIPPLKRPAEFHEQRKHLDSDKAKNSLKRKARNRCNSADLVNMHILQASTAERSIPTAQMKLKRARLADDLNEKIALRPGPLELVEKNILPVDSAVKEAIKGNQVSFSKSTDAFAFEEDSSSDGLSPDQTRSEDPQNSAGSPPDAKASDTPSTGSLGTNQDLASGSENDRNDSASQPSHQSDAGKQGLGPPSTPIAVHAAVKSKSLGDSKNRHKKPKDPKPKVKKLKYHQYIPPDQKAEKSPPPMDSAYARLLQQQQLFLQLQILSQQQQQQQHRFSYLGMHQAQLKEPNEQMVRNPNSSSTPLSNTPLSPVKNSFSGQTGVSSFKPGPLPPNLDDLKVSELRQQLRIRGLPVSGTKTALMDRLRPFQDCSGNPVPNFGDITTVTFPVTPNTLPNYQSSSSTSALSNGFYHFGSTSSSPPISPASSDLSVAGSLPDTFNDASPSFGLHPSPVHVCTEESLMSSLNGGSVPSELDGLDSEKDKMLVEKQKVINELTWKLQQEQRQVEELRMQLQKQKRNNCSEKKPLPFLAASIKQEEAVSSCPFASQVPVKRQSSSSECHPPACEAAQLQPLGNAHCVESSDQTNVLSSTFLSPQCSPQHSPLGAVKSPQHISLPPSPNNPHFLPSSSGAQGEGHRVSSPISSQVCTAQMAGLHSSDKVGPKFSIPSPTFSKSSSAISEVTQPPSYEDAVKQQMTRSQQMDELLDVLIESGEMPADAREDHSCLQKVPKIPRSSRSPTAVLTKPSASFEQASSGSQIPFDPYATDSDEHLEVLLNSQSPLGKMSDVTLLKIGSEEPHFDGIMDGFSGKAAEDLFNAHEILPGPLSPMQTQFSPSSVDSNGLQLSFTESPWETMEWLDLTPPNSTPGFSALTTSSPSIFNIDFLDVTDLNLNSSMDLHLQQW</sequence>